<reference key="1">
    <citation type="journal article" date="2007" name="Science">
        <title>Legumes symbioses: absence of nod genes in photosynthetic bradyrhizobia.</title>
        <authorList>
            <person name="Giraud E."/>
            <person name="Moulin L."/>
            <person name="Vallenet D."/>
            <person name="Barbe V."/>
            <person name="Cytryn E."/>
            <person name="Avarre J.-C."/>
            <person name="Jaubert M."/>
            <person name="Simon D."/>
            <person name="Cartieaux F."/>
            <person name="Prin Y."/>
            <person name="Bena G."/>
            <person name="Hannibal L."/>
            <person name="Fardoux J."/>
            <person name="Kojadinovic M."/>
            <person name="Vuillet L."/>
            <person name="Lajus A."/>
            <person name="Cruveiller S."/>
            <person name="Rouy Z."/>
            <person name="Mangenot S."/>
            <person name="Segurens B."/>
            <person name="Dossat C."/>
            <person name="Franck W.L."/>
            <person name="Chang W.-S."/>
            <person name="Saunders E."/>
            <person name="Bruce D."/>
            <person name="Richardson P."/>
            <person name="Normand P."/>
            <person name="Dreyfus B."/>
            <person name="Pignol D."/>
            <person name="Stacey G."/>
            <person name="Emerich D."/>
            <person name="Vermeglio A."/>
            <person name="Medigue C."/>
            <person name="Sadowsky M."/>
        </authorList>
    </citation>
    <scope>NUCLEOTIDE SEQUENCE [LARGE SCALE GENOMIC DNA]</scope>
    <source>
        <strain>BTAi1 / ATCC BAA-1182</strain>
    </source>
</reference>
<keyword id="KW-1185">Reference proteome</keyword>
<evidence type="ECO:0000255" key="1">
    <source>
        <dbReference type="HAMAP-Rule" id="MF_00758"/>
    </source>
</evidence>
<feature type="chain" id="PRO_1000046641" description="UPF0301 protein BBta_6966">
    <location>
        <begin position="1"/>
        <end position="216"/>
    </location>
</feature>
<name>Y6966_BRASB</name>
<gene>
    <name type="ordered locus">BBta_6966</name>
</gene>
<sequence>MNPDAKRLGDVRRKVTGIGDHTSHGGYLDGQLLVAMPVMGDSRFERSVIYLCAHSAEGAMGIMVNRPAGSIDFPQLLMQLNIIEKGDQISLPDSAETMKVLSGGPVDTGRGFVLHSSDYFIANATLKINDGVCLTTTIDILKAIAKGNGPKHALLALGYAGWRAGQLEEEIQDNGWLHCDADPELIFGDNVEDKYDLALRKIGIDPGMLSNAAGHA</sequence>
<protein>
    <recommendedName>
        <fullName evidence="1">UPF0301 protein BBta_6966</fullName>
    </recommendedName>
</protein>
<comment type="similarity">
    <text evidence="1">Belongs to the UPF0301 (AlgH) family.</text>
</comment>
<proteinExistence type="inferred from homology"/>
<organism>
    <name type="scientific">Bradyrhizobium sp. (strain BTAi1 / ATCC BAA-1182)</name>
    <dbReference type="NCBI Taxonomy" id="288000"/>
    <lineage>
        <taxon>Bacteria</taxon>
        <taxon>Pseudomonadati</taxon>
        <taxon>Pseudomonadota</taxon>
        <taxon>Alphaproteobacteria</taxon>
        <taxon>Hyphomicrobiales</taxon>
        <taxon>Nitrobacteraceae</taxon>
        <taxon>Bradyrhizobium</taxon>
    </lineage>
</organism>
<accession>A5ERQ9</accession>
<dbReference type="EMBL" id="CP000494">
    <property type="protein sequence ID" value="ABQ38853.1"/>
    <property type="molecule type" value="Genomic_DNA"/>
</dbReference>
<dbReference type="RefSeq" id="WP_012046785.1">
    <property type="nucleotide sequence ID" value="NC_009485.1"/>
</dbReference>
<dbReference type="SMR" id="A5ERQ9"/>
<dbReference type="STRING" id="288000.BBta_6966"/>
<dbReference type="KEGG" id="bbt:BBta_6966"/>
<dbReference type="eggNOG" id="COG1678">
    <property type="taxonomic scope" value="Bacteria"/>
</dbReference>
<dbReference type="HOGENOM" id="CLU_057596_1_0_5"/>
<dbReference type="OrthoDB" id="9807486at2"/>
<dbReference type="Proteomes" id="UP000000246">
    <property type="component" value="Chromosome"/>
</dbReference>
<dbReference type="GO" id="GO:0005829">
    <property type="term" value="C:cytosol"/>
    <property type="evidence" value="ECO:0007669"/>
    <property type="project" value="TreeGrafter"/>
</dbReference>
<dbReference type="Gene3D" id="3.40.1740.10">
    <property type="entry name" value="VC0467-like"/>
    <property type="match status" value="1"/>
</dbReference>
<dbReference type="HAMAP" id="MF_00758">
    <property type="entry name" value="UPF0301"/>
    <property type="match status" value="1"/>
</dbReference>
<dbReference type="InterPro" id="IPR003774">
    <property type="entry name" value="AlgH-like"/>
</dbReference>
<dbReference type="NCBIfam" id="NF001268">
    <property type="entry name" value="PRK00228.1-4"/>
    <property type="match status" value="1"/>
</dbReference>
<dbReference type="PANTHER" id="PTHR30327">
    <property type="entry name" value="UNCHARACTERIZED PROTEIN YQGE"/>
    <property type="match status" value="1"/>
</dbReference>
<dbReference type="PANTHER" id="PTHR30327:SF1">
    <property type="entry name" value="UPF0301 PROTEIN YQGE"/>
    <property type="match status" value="1"/>
</dbReference>
<dbReference type="Pfam" id="PF02622">
    <property type="entry name" value="DUF179"/>
    <property type="match status" value="1"/>
</dbReference>
<dbReference type="SUPFAM" id="SSF143456">
    <property type="entry name" value="VC0467-like"/>
    <property type="match status" value="1"/>
</dbReference>